<sequence length="72" mass="8079">MKADIHPKYAEVNVTCSCGHVFTTRSTLGKPELHVEVCAACHPFYTGKQKIVDTAGRVERFRQKYGNVQRLG</sequence>
<gene>
    <name evidence="1" type="primary">rpmE</name>
    <name type="ordered locus">azo1521</name>
</gene>
<feature type="chain" id="PRO_1000126563" description="Large ribosomal subunit protein bL31">
    <location>
        <begin position="1"/>
        <end position="72"/>
    </location>
</feature>
<feature type="binding site" evidence="1">
    <location>
        <position position="16"/>
    </location>
    <ligand>
        <name>Zn(2+)</name>
        <dbReference type="ChEBI" id="CHEBI:29105"/>
    </ligand>
</feature>
<feature type="binding site" evidence="1">
    <location>
        <position position="18"/>
    </location>
    <ligand>
        <name>Zn(2+)</name>
        <dbReference type="ChEBI" id="CHEBI:29105"/>
    </ligand>
</feature>
<feature type="binding site" evidence="1">
    <location>
        <position position="38"/>
    </location>
    <ligand>
        <name>Zn(2+)</name>
        <dbReference type="ChEBI" id="CHEBI:29105"/>
    </ligand>
</feature>
<feature type="binding site" evidence="1">
    <location>
        <position position="41"/>
    </location>
    <ligand>
        <name>Zn(2+)</name>
        <dbReference type="ChEBI" id="CHEBI:29105"/>
    </ligand>
</feature>
<name>RL31_AZOSB</name>
<dbReference type="EMBL" id="AM406670">
    <property type="protein sequence ID" value="CAL94138.1"/>
    <property type="molecule type" value="Genomic_DNA"/>
</dbReference>
<dbReference type="RefSeq" id="WP_011765254.1">
    <property type="nucleotide sequence ID" value="NC_008702.1"/>
</dbReference>
<dbReference type="SMR" id="A1K5N3"/>
<dbReference type="STRING" id="62928.azo1521"/>
<dbReference type="KEGG" id="aoa:dqs_1644"/>
<dbReference type="KEGG" id="azo:azo1521"/>
<dbReference type="eggNOG" id="COG0254">
    <property type="taxonomic scope" value="Bacteria"/>
</dbReference>
<dbReference type="HOGENOM" id="CLU_114306_4_0_4"/>
<dbReference type="OrthoDB" id="9803251at2"/>
<dbReference type="Proteomes" id="UP000002588">
    <property type="component" value="Chromosome"/>
</dbReference>
<dbReference type="GO" id="GO:1990904">
    <property type="term" value="C:ribonucleoprotein complex"/>
    <property type="evidence" value="ECO:0007669"/>
    <property type="project" value="UniProtKB-KW"/>
</dbReference>
<dbReference type="GO" id="GO:0005840">
    <property type="term" value="C:ribosome"/>
    <property type="evidence" value="ECO:0007669"/>
    <property type="project" value="UniProtKB-KW"/>
</dbReference>
<dbReference type="GO" id="GO:0046872">
    <property type="term" value="F:metal ion binding"/>
    <property type="evidence" value="ECO:0007669"/>
    <property type="project" value="UniProtKB-KW"/>
</dbReference>
<dbReference type="GO" id="GO:0019843">
    <property type="term" value="F:rRNA binding"/>
    <property type="evidence" value="ECO:0007669"/>
    <property type="project" value="UniProtKB-KW"/>
</dbReference>
<dbReference type="GO" id="GO:0003735">
    <property type="term" value="F:structural constituent of ribosome"/>
    <property type="evidence" value="ECO:0007669"/>
    <property type="project" value="InterPro"/>
</dbReference>
<dbReference type="GO" id="GO:0006412">
    <property type="term" value="P:translation"/>
    <property type="evidence" value="ECO:0007669"/>
    <property type="project" value="UniProtKB-UniRule"/>
</dbReference>
<dbReference type="Gene3D" id="4.10.830.30">
    <property type="entry name" value="Ribosomal protein L31"/>
    <property type="match status" value="1"/>
</dbReference>
<dbReference type="HAMAP" id="MF_00501">
    <property type="entry name" value="Ribosomal_bL31_1"/>
    <property type="match status" value="1"/>
</dbReference>
<dbReference type="InterPro" id="IPR034704">
    <property type="entry name" value="Ribosomal_bL28/bL31-like_sf"/>
</dbReference>
<dbReference type="InterPro" id="IPR002150">
    <property type="entry name" value="Ribosomal_bL31"/>
</dbReference>
<dbReference type="InterPro" id="IPR027491">
    <property type="entry name" value="Ribosomal_bL31_A"/>
</dbReference>
<dbReference type="InterPro" id="IPR042105">
    <property type="entry name" value="Ribosomal_bL31_sf"/>
</dbReference>
<dbReference type="NCBIfam" id="TIGR00105">
    <property type="entry name" value="L31"/>
    <property type="match status" value="1"/>
</dbReference>
<dbReference type="NCBIfam" id="NF000612">
    <property type="entry name" value="PRK00019.1"/>
    <property type="match status" value="1"/>
</dbReference>
<dbReference type="NCBIfam" id="NF001809">
    <property type="entry name" value="PRK00528.1"/>
    <property type="match status" value="1"/>
</dbReference>
<dbReference type="PANTHER" id="PTHR33280">
    <property type="entry name" value="50S RIBOSOMAL PROTEIN L31, CHLOROPLASTIC"/>
    <property type="match status" value="1"/>
</dbReference>
<dbReference type="PANTHER" id="PTHR33280:SF1">
    <property type="entry name" value="LARGE RIBOSOMAL SUBUNIT PROTEIN BL31C"/>
    <property type="match status" value="1"/>
</dbReference>
<dbReference type="Pfam" id="PF01197">
    <property type="entry name" value="Ribosomal_L31"/>
    <property type="match status" value="1"/>
</dbReference>
<dbReference type="PRINTS" id="PR01249">
    <property type="entry name" value="RIBOSOMALL31"/>
</dbReference>
<dbReference type="SUPFAM" id="SSF143800">
    <property type="entry name" value="L28p-like"/>
    <property type="match status" value="1"/>
</dbReference>
<dbReference type="PROSITE" id="PS01143">
    <property type="entry name" value="RIBOSOMAL_L31"/>
    <property type="match status" value="1"/>
</dbReference>
<comment type="function">
    <text evidence="1">Binds the 23S rRNA.</text>
</comment>
<comment type="cofactor">
    <cofactor evidence="1">
        <name>Zn(2+)</name>
        <dbReference type="ChEBI" id="CHEBI:29105"/>
    </cofactor>
    <text evidence="1">Binds 1 zinc ion per subunit.</text>
</comment>
<comment type="subunit">
    <text evidence="1">Part of the 50S ribosomal subunit.</text>
</comment>
<comment type="similarity">
    <text evidence="1">Belongs to the bacterial ribosomal protein bL31 family. Type A subfamily.</text>
</comment>
<keyword id="KW-0479">Metal-binding</keyword>
<keyword id="KW-1185">Reference proteome</keyword>
<keyword id="KW-0687">Ribonucleoprotein</keyword>
<keyword id="KW-0689">Ribosomal protein</keyword>
<keyword id="KW-0694">RNA-binding</keyword>
<keyword id="KW-0699">rRNA-binding</keyword>
<keyword id="KW-0862">Zinc</keyword>
<accession>A1K5N3</accession>
<organism>
    <name type="scientific">Azoarcus sp. (strain BH72)</name>
    <dbReference type="NCBI Taxonomy" id="418699"/>
    <lineage>
        <taxon>Bacteria</taxon>
        <taxon>Pseudomonadati</taxon>
        <taxon>Pseudomonadota</taxon>
        <taxon>Betaproteobacteria</taxon>
        <taxon>Rhodocyclales</taxon>
        <taxon>Zoogloeaceae</taxon>
        <taxon>Azoarcus</taxon>
    </lineage>
</organism>
<protein>
    <recommendedName>
        <fullName evidence="1">Large ribosomal subunit protein bL31</fullName>
    </recommendedName>
    <alternativeName>
        <fullName evidence="2">50S ribosomal protein L31</fullName>
    </alternativeName>
</protein>
<reference key="1">
    <citation type="journal article" date="2006" name="Nat. Biotechnol.">
        <title>Complete genome of the mutualistic, N2-fixing grass endophyte Azoarcus sp. strain BH72.</title>
        <authorList>
            <person name="Krause A."/>
            <person name="Ramakumar A."/>
            <person name="Bartels D."/>
            <person name="Battistoni F."/>
            <person name="Bekel T."/>
            <person name="Boch J."/>
            <person name="Boehm M."/>
            <person name="Friedrich F."/>
            <person name="Hurek T."/>
            <person name="Krause L."/>
            <person name="Linke B."/>
            <person name="McHardy A.C."/>
            <person name="Sarkar A."/>
            <person name="Schneiker S."/>
            <person name="Syed A.A."/>
            <person name="Thauer R."/>
            <person name="Vorhoelter F.-J."/>
            <person name="Weidner S."/>
            <person name="Puehler A."/>
            <person name="Reinhold-Hurek B."/>
            <person name="Kaiser O."/>
            <person name="Goesmann A."/>
        </authorList>
    </citation>
    <scope>NUCLEOTIDE SEQUENCE [LARGE SCALE GENOMIC DNA]</scope>
    <source>
        <strain>BH72</strain>
    </source>
</reference>
<proteinExistence type="inferred from homology"/>
<evidence type="ECO:0000255" key="1">
    <source>
        <dbReference type="HAMAP-Rule" id="MF_00501"/>
    </source>
</evidence>
<evidence type="ECO:0000305" key="2"/>